<feature type="chain" id="PRO_1000147408" description="UDP-N-acetylmuramoylalanine--D-glutamate ligase">
    <location>
        <begin position="1"/>
        <end position="411"/>
    </location>
</feature>
<feature type="binding site" evidence="1">
    <location>
        <begin position="92"/>
        <end position="98"/>
    </location>
    <ligand>
        <name>ATP</name>
        <dbReference type="ChEBI" id="CHEBI:30616"/>
    </ligand>
</feature>
<keyword id="KW-0067">ATP-binding</keyword>
<keyword id="KW-0131">Cell cycle</keyword>
<keyword id="KW-0132">Cell division</keyword>
<keyword id="KW-0133">Cell shape</keyword>
<keyword id="KW-0961">Cell wall biogenesis/degradation</keyword>
<keyword id="KW-0963">Cytoplasm</keyword>
<keyword id="KW-0436">Ligase</keyword>
<keyword id="KW-0547">Nucleotide-binding</keyword>
<keyword id="KW-0573">Peptidoglycan synthesis</keyword>
<organism>
    <name type="scientific">Hydrogenobaculum sp. (strain Y04AAS1)</name>
    <dbReference type="NCBI Taxonomy" id="380749"/>
    <lineage>
        <taxon>Bacteria</taxon>
        <taxon>Pseudomonadati</taxon>
        <taxon>Aquificota</taxon>
        <taxon>Aquificia</taxon>
        <taxon>Aquificales</taxon>
        <taxon>Aquificaceae</taxon>
        <taxon>Hydrogenobaculum</taxon>
    </lineage>
</organism>
<name>MURD_HYDS0</name>
<proteinExistence type="inferred from homology"/>
<comment type="function">
    <text evidence="1">Cell wall formation. Catalyzes the addition of glutamate to the nucleotide precursor UDP-N-acetylmuramoyl-L-alanine (UMA).</text>
</comment>
<comment type="catalytic activity">
    <reaction evidence="1">
        <text>UDP-N-acetyl-alpha-D-muramoyl-L-alanine + D-glutamate + ATP = UDP-N-acetyl-alpha-D-muramoyl-L-alanyl-D-glutamate + ADP + phosphate + H(+)</text>
        <dbReference type="Rhea" id="RHEA:16429"/>
        <dbReference type="ChEBI" id="CHEBI:15378"/>
        <dbReference type="ChEBI" id="CHEBI:29986"/>
        <dbReference type="ChEBI" id="CHEBI:30616"/>
        <dbReference type="ChEBI" id="CHEBI:43474"/>
        <dbReference type="ChEBI" id="CHEBI:83898"/>
        <dbReference type="ChEBI" id="CHEBI:83900"/>
        <dbReference type="ChEBI" id="CHEBI:456216"/>
        <dbReference type="EC" id="6.3.2.9"/>
    </reaction>
</comment>
<comment type="pathway">
    <text evidence="1">Cell wall biogenesis; peptidoglycan biosynthesis.</text>
</comment>
<comment type="subcellular location">
    <subcellularLocation>
        <location evidence="1">Cytoplasm</location>
    </subcellularLocation>
</comment>
<comment type="similarity">
    <text evidence="1">Belongs to the MurCDEF family.</text>
</comment>
<evidence type="ECO:0000255" key="1">
    <source>
        <dbReference type="HAMAP-Rule" id="MF_00639"/>
    </source>
</evidence>
<protein>
    <recommendedName>
        <fullName evidence="1">UDP-N-acetylmuramoylalanine--D-glutamate ligase</fullName>
        <ecNumber evidence="1">6.3.2.9</ecNumber>
    </recommendedName>
    <alternativeName>
        <fullName evidence="1">D-glutamic acid-adding enzyme</fullName>
    </alternativeName>
    <alternativeName>
        <fullName evidence="1">UDP-N-acetylmuramoyl-L-alanyl-D-glutamate synthetase</fullName>
    </alternativeName>
</protein>
<sequence>MAYLVWGKGRSGLAAFNLLKAKGFKAYIGDDKEDKNLWQDVWNEIDTVVLSPGIPPFHPLWKEAIKSSKEVIGETELAYRFYKGKNIIAVTGTDGKSTTVHLIHHFTSFKEGGNFGTPFSEIVLDNDKENVALEASSFQGKTLDTFRPNVGVFLNFSKDHLDWHPSLEDYLLSKQKIFKNQTQEDILILNAQKPVCDTPSLAKKIFFGENGDLKVVGSDVYYKDELLIENISHPSLKGLHNLYNIAVASFVAFSMGISLEEIKKNLETFEALPFRYQYLGNFEGIDICNDSKSTTVNALMSALESTKAPILLIAGGIDKGGDFSSIEAYKDKIKAVFLYGKDKNLIKDQIEHFLKVYVLEDLESALLKVKEQARKGDTILFSPACASFDMFESYKHRGEVFNELVKKHFNS</sequence>
<dbReference type="EC" id="6.3.2.9" evidence="1"/>
<dbReference type="EMBL" id="CP001130">
    <property type="protein sequence ID" value="ACG58199.1"/>
    <property type="molecule type" value="Genomic_DNA"/>
</dbReference>
<dbReference type="RefSeq" id="WP_012514555.1">
    <property type="nucleotide sequence ID" value="NC_011126.1"/>
</dbReference>
<dbReference type="SMR" id="B4U609"/>
<dbReference type="STRING" id="380749.HY04AAS1_1516"/>
<dbReference type="KEGG" id="hya:HY04AAS1_1516"/>
<dbReference type="eggNOG" id="COG0771">
    <property type="taxonomic scope" value="Bacteria"/>
</dbReference>
<dbReference type="HOGENOM" id="CLU_032540_0_1_0"/>
<dbReference type="OrthoDB" id="9809796at2"/>
<dbReference type="UniPathway" id="UPA00219"/>
<dbReference type="GO" id="GO:0005737">
    <property type="term" value="C:cytoplasm"/>
    <property type="evidence" value="ECO:0007669"/>
    <property type="project" value="UniProtKB-SubCell"/>
</dbReference>
<dbReference type="GO" id="GO:0005524">
    <property type="term" value="F:ATP binding"/>
    <property type="evidence" value="ECO:0007669"/>
    <property type="project" value="UniProtKB-UniRule"/>
</dbReference>
<dbReference type="GO" id="GO:0008764">
    <property type="term" value="F:UDP-N-acetylmuramoylalanine-D-glutamate ligase activity"/>
    <property type="evidence" value="ECO:0007669"/>
    <property type="project" value="UniProtKB-UniRule"/>
</dbReference>
<dbReference type="GO" id="GO:0051301">
    <property type="term" value="P:cell division"/>
    <property type="evidence" value="ECO:0007669"/>
    <property type="project" value="UniProtKB-KW"/>
</dbReference>
<dbReference type="GO" id="GO:0071555">
    <property type="term" value="P:cell wall organization"/>
    <property type="evidence" value="ECO:0007669"/>
    <property type="project" value="UniProtKB-KW"/>
</dbReference>
<dbReference type="GO" id="GO:0009252">
    <property type="term" value="P:peptidoglycan biosynthetic process"/>
    <property type="evidence" value="ECO:0007669"/>
    <property type="project" value="UniProtKB-UniRule"/>
</dbReference>
<dbReference type="GO" id="GO:0008360">
    <property type="term" value="P:regulation of cell shape"/>
    <property type="evidence" value="ECO:0007669"/>
    <property type="project" value="UniProtKB-KW"/>
</dbReference>
<dbReference type="Gene3D" id="3.90.190.20">
    <property type="entry name" value="Mur ligase, C-terminal domain"/>
    <property type="match status" value="1"/>
</dbReference>
<dbReference type="Gene3D" id="3.40.1190.10">
    <property type="entry name" value="Mur-like, catalytic domain"/>
    <property type="match status" value="1"/>
</dbReference>
<dbReference type="HAMAP" id="MF_00639">
    <property type="entry name" value="MurD"/>
    <property type="match status" value="1"/>
</dbReference>
<dbReference type="InterPro" id="IPR036565">
    <property type="entry name" value="Mur-like_cat_sf"/>
</dbReference>
<dbReference type="InterPro" id="IPR004101">
    <property type="entry name" value="Mur_ligase_C"/>
</dbReference>
<dbReference type="InterPro" id="IPR036615">
    <property type="entry name" value="Mur_ligase_C_dom_sf"/>
</dbReference>
<dbReference type="InterPro" id="IPR013221">
    <property type="entry name" value="Mur_ligase_cen"/>
</dbReference>
<dbReference type="InterPro" id="IPR005762">
    <property type="entry name" value="MurD"/>
</dbReference>
<dbReference type="NCBIfam" id="TIGR01087">
    <property type="entry name" value="murD"/>
    <property type="match status" value="1"/>
</dbReference>
<dbReference type="PANTHER" id="PTHR43692">
    <property type="entry name" value="UDP-N-ACETYLMURAMOYLALANINE--D-GLUTAMATE LIGASE"/>
    <property type="match status" value="1"/>
</dbReference>
<dbReference type="PANTHER" id="PTHR43692:SF1">
    <property type="entry name" value="UDP-N-ACETYLMURAMOYLALANINE--D-GLUTAMATE LIGASE"/>
    <property type="match status" value="1"/>
</dbReference>
<dbReference type="Pfam" id="PF02875">
    <property type="entry name" value="Mur_ligase_C"/>
    <property type="match status" value="1"/>
</dbReference>
<dbReference type="Pfam" id="PF08245">
    <property type="entry name" value="Mur_ligase_M"/>
    <property type="match status" value="1"/>
</dbReference>
<dbReference type="SUPFAM" id="SSF51984">
    <property type="entry name" value="MurCD N-terminal domain"/>
    <property type="match status" value="1"/>
</dbReference>
<dbReference type="SUPFAM" id="SSF53623">
    <property type="entry name" value="MurD-like peptide ligases, catalytic domain"/>
    <property type="match status" value="1"/>
</dbReference>
<dbReference type="SUPFAM" id="SSF53244">
    <property type="entry name" value="MurD-like peptide ligases, peptide-binding domain"/>
    <property type="match status" value="1"/>
</dbReference>
<reference key="1">
    <citation type="journal article" date="2009" name="J. Bacteriol.">
        <title>Complete and draft genome sequences of six members of the Aquificales.</title>
        <authorList>
            <person name="Reysenbach A.-L."/>
            <person name="Hamamura N."/>
            <person name="Podar M."/>
            <person name="Griffiths E."/>
            <person name="Ferreira S."/>
            <person name="Hochstein R."/>
            <person name="Heidelberg J."/>
            <person name="Johnson J."/>
            <person name="Mead D."/>
            <person name="Pohorille A."/>
            <person name="Sarmiento M."/>
            <person name="Schweighofer K."/>
            <person name="Seshadri R."/>
            <person name="Voytek M.A."/>
        </authorList>
    </citation>
    <scope>NUCLEOTIDE SEQUENCE [LARGE SCALE GENOMIC DNA]</scope>
    <source>
        <strain>Y04AAS1</strain>
    </source>
</reference>
<accession>B4U609</accession>
<gene>
    <name evidence="1" type="primary">murD</name>
    <name type="ordered locus">HY04AAS1_1516</name>
</gene>